<evidence type="ECO:0000250" key="1">
    <source>
        <dbReference type="UniProtKB" id="Q8BY71"/>
    </source>
</evidence>
<evidence type="ECO:0000269" key="2">
    <source>
    </source>
</evidence>
<evidence type="ECO:0000269" key="3">
    <source>
    </source>
</evidence>
<evidence type="ECO:0000269" key="4">
    <source>
    </source>
</evidence>
<evidence type="ECO:0000269" key="5">
    <source>
    </source>
</evidence>
<evidence type="ECO:0000269" key="6">
    <source>
    </source>
</evidence>
<evidence type="ECO:0000269" key="7">
    <source>
    </source>
</evidence>
<evidence type="ECO:0000269" key="8">
    <source>
    </source>
</evidence>
<evidence type="ECO:0000269" key="9">
    <source>
    </source>
</evidence>
<evidence type="ECO:0000269" key="10">
    <source>
    </source>
</evidence>
<evidence type="ECO:0000269" key="11">
    <source>
    </source>
</evidence>
<evidence type="ECO:0000269" key="12">
    <source>
    </source>
</evidence>
<evidence type="ECO:0000269" key="13">
    <source>
    </source>
</evidence>
<evidence type="ECO:0000269" key="14">
    <source>
    </source>
</evidence>
<evidence type="ECO:0000303" key="15">
    <source>
    </source>
</evidence>
<evidence type="ECO:0000303" key="16">
    <source>
    </source>
</evidence>
<evidence type="ECO:0000305" key="17"/>
<evidence type="ECO:0007744" key="18">
    <source>
    </source>
</evidence>
<evidence type="ECO:0007744" key="19">
    <source>
    </source>
</evidence>
<evidence type="ECO:0007744" key="20">
    <source>
    </source>
</evidence>
<evidence type="ECO:0007829" key="21">
    <source>
        <dbReference type="PDB" id="6VO5"/>
    </source>
</evidence>
<gene>
    <name type="primary">HAT1</name>
    <name type="synonym">KAT1</name>
</gene>
<comment type="function">
    <text evidence="2 6 7 8 10 12 13">Histone acetyltransferase that plays a role in different biological processes including cell cycle progression, glucose metabolism, histone production or DNA damage repair (PubMed:20953179, PubMed:23653357, PubMed:31278053, PubMed:32081014). Coordinates histone production and acetylation via H4 promoter binding (PubMed:31278053). Acetylates histone H4 at 'Lys-5' (H4K5ac) and 'Lys-12' (H4K12ac) and, to a lesser extent, histone H2A at 'Lys-5' (H2AK5ac) (PubMed:11585814, PubMed:22615379). Drives H4 production by chromatin binding to support chromatin replication and acetylation. Since transcription of H4 genes is tightly coupled to S-phase, plays an important role in S-phase entry and progression (PubMed:31278053). Promotes homologous recombination in DNA repair by facilitating histone turnover and incorporation of acetylated H3.3 at sites of double-strand breaks (PubMed:23653357). In addition, acetylates other substrates such as chromatin-related proteins (PubMed:32081014). Also acetylates RSAD2 which mediates the interaction of ubiquitin ligase UBE4A with RSAD2 leading to RSAD2 ubiquitination and subsequent degradation (PubMed:31812350).</text>
</comment>
<comment type="function">
    <text evidence="11">(Microbial infection) Contributes to hepatitis B virus (HBV) replication by acetylating histone H4 at the sites of 'Lys-5' and 'Lys-12' on the covalently closed circular DNA (cccDNA) minichromosome leading to its accumulation within the host cell.</text>
</comment>
<comment type="catalytic activity">
    <reaction evidence="2 7 14">
        <text>L-lysyl-[protein] + acetyl-CoA = N(6)-acetyl-L-lysyl-[protein] + CoA + H(+)</text>
        <dbReference type="Rhea" id="RHEA:45948"/>
        <dbReference type="Rhea" id="RHEA-COMP:9752"/>
        <dbReference type="Rhea" id="RHEA-COMP:10731"/>
        <dbReference type="ChEBI" id="CHEBI:15378"/>
        <dbReference type="ChEBI" id="CHEBI:29969"/>
        <dbReference type="ChEBI" id="CHEBI:57287"/>
        <dbReference type="ChEBI" id="CHEBI:57288"/>
        <dbReference type="ChEBI" id="CHEBI:61930"/>
        <dbReference type="EC" id="2.3.1.48"/>
    </reaction>
</comment>
<comment type="biophysicochemical properties">
    <kinetics>
        <KM evidence="7">6.68 uM for acetyl-CoA</KM>
        <text evidence="7">kcat is 4.14 sec(-1) for acetyl-CoA.</text>
    </kinetics>
</comment>
<comment type="subunit">
    <text evidence="6 7 14">Catalytic subunit of the type B histone acetyltransferase (HAT) complex, composed of RBBP7 and HAT1. Interacts with histones H4 and H2A. The interaction is dependent of the ability of RBBP7 to bind to the N-terminus of histones. Component of the histone H3.1 and H3.3 complexes.</text>
</comment>
<comment type="interaction">
    <interactant intactId="EBI-2339359">
        <id>O14929</id>
    </interactant>
    <interactant intactId="EBI-302023">
        <id>P62805</id>
        <label>H4C9</label>
    </interactant>
    <organismsDiffer>false</organismsDiffer>
    <experiments>7</experiments>
</comment>
<comment type="interaction">
    <interactant intactId="EBI-2339359">
        <id>O14929</id>
    </interactant>
    <interactant intactId="EBI-9355810">
        <id>Q5T7N3</id>
        <label>KANK4</label>
    </interactant>
    <organismsDiffer>false</organismsDiffer>
    <experiments>3</experiments>
</comment>
<comment type="interaction">
    <interactant intactId="EBI-2339359">
        <id>O14929</id>
    </interactant>
    <interactant intactId="EBI-748397">
        <id>P50222</id>
        <label>MEOX2</label>
    </interactant>
    <organismsDiffer>false</organismsDiffer>
    <experiments>3</experiments>
</comment>
<comment type="interaction">
    <interactant intactId="EBI-2339359">
        <id>O14929</id>
    </interactant>
    <interactant intactId="EBI-16439278">
        <id>Q6FHY5</id>
        <label>MEOX2</label>
    </interactant>
    <organismsDiffer>false</organismsDiffer>
    <experiments>3</experiments>
</comment>
<comment type="interaction">
    <interactant intactId="EBI-2339359">
        <id>O14929</id>
    </interactant>
    <interactant intactId="EBI-12835568">
        <id>Q5VZ52</id>
        <label>MORN5</label>
    </interactant>
    <organismsDiffer>false</organismsDiffer>
    <experiments>5</experiments>
</comment>
<comment type="interaction">
    <interactant intactId="EBI-2339359">
        <id>O14929</id>
    </interactant>
    <interactant intactId="EBI-620823">
        <id>Q09028</id>
        <label>RBBP4</label>
    </interactant>
    <organismsDiffer>false</organismsDiffer>
    <experiments>7</experiments>
</comment>
<comment type="interaction">
    <interactant intactId="EBI-2339359">
        <id>O14929</id>
    </interactant>
    <interactant intactId="EBI-307352">
        <id>Q04864</id>
        <label>REL</label>
    </interactant>
    <organismsDiffer>false</organismsDiffer>
    <experiments>3</experiments>
</comment>
<comment type="interaction">
    <interactant intactId="EBI-2339359">
        <id>O14929</id>
    </interactant>
    <interactant intactId="EBI-10829018">
        <id>Q04864-2</id>
        <label>REL</label>
    </interactant>
    <organismsDiffer>false</organismsDiffer>
    <experiments>3</experiments>
</comment>
<comment type="interaction">
    <interactant intactId="EBI-2339359">
        <id>O14929</id>
    </interactant>
    <interactant intactId="EBI-11915024">
        <id>Q16533</id>
        <label>SNAPC1</label>
    </interactant>
    <organismsDiffer>false</organismsDiffer>
    <experiments>3</experiments>
</comment>
<comment type="interaction">
    <interactant intactId="EBI-2339359">
        <id>O14929</id>
    </interactant>
    <interactant intactId="EBI-1053419">
        <id>Q9H5V9</id>
        <label>STEEP1</label>
    </interactant>
    <organismsDiffer>false</organismsDiffer>
    <experiments>3</experiments>
</comment>
<comment type="interaction">
    <interactant intactId="EBI-2339359">
        <id>O14929</id>
    </interactant>
    <interactant intactId="EBI-533224">
        <id>P15884</id>
        <label>TCF4</label>
    </interactant>
    <organismsDiffer>false</organismsDiffer>
    <experiments>3</experiments>
</comment>
<comment type="interaction">
    <interactant intactId="EBI-2339359">
        <id>O14929</id>
    </interactant>
    <interactant intactId="EBI-11139477">
        <id>Q96N21</id>
        <label>TEPSIN</label>
    </interactant>
    <organismsDiffer>false</organismsDiffer>
    <experiments>3</experiments>
</comment>
<comment type="interaction">
    <interactant intactId="EBI-2339359">
        <id>O14929</id>
    </interactant>
    <interactant intactId="EBI-2505861">
        <id>Q13829</id>
        <label>TNFAIP1</label>
    </interactant>
    <organismsDiffer>false</organismsDiffer>
    <experiments>3</experiments>
</comment>
<comment type="interaction">
    <interactant intactId="EBI-2339359">
        <id>O14929</id>
    </interactant>
    <interactant intactId="EBI-492476">
        <id>Q96RU7</id>
        <label>TRIB3</label>
    </interactant>
    <organismsDiffer>false</organismsDiffer>
    <experiments>3</experiments>
</comment>
<comment type="interaction">
    <interactant intactId="EBI-2339359">
        <id>O14929</id>
    </interactant>
    <interactant intactId="EBI-7252920">
        <id>Q8NAM6</id>
        <label>ZSCAN4</label>
    </interactant>
    <organismsDiffer>false</organismsDiffer>
    <experiments>3</experiments>
</comment>
<comment type="interaction">
    <interactant intactId="EBI-2339359">
        <id>O14929</id>
    </interactant>
    <interactant intactId="EBI-6164519">
        <id>P12520</id>
        <label>vpr</label>
    </interactant>
    <organismsDiffer>true</organismsDiffer>
    <experiments>3</experiments>
</comment>
<comment type="interaction">
    <interactant intactId="EBI-10181798">
        <id>O14929-2</id>
    </interactant>
    <interactant intactId="EBI-748397">
        <id>P50222</id>
        <label>MEOX2</label>
    </interactant>
    <organismsDiffer>false</organismsDiffer>
    <experiments>3</experiments>
</comment>
<comment type="subcellular location">
    <molecule>Isoform A</molecule>
    <subcellularLocation>
        <location evidence="5 8">Nucleus matrix</location>
    </subcellularLocation>
    <subcellularLocation>
        <location evidence="13">Mitochondrion</location>
    </subcellularLocation>
</comment>
<comment type="subcellular location">
    <molecule>Isoform B</molecule>
    <subcellularLocation>
        <location evidence="5">Cytoplasm</location>
    </subcellularLocation>
    <subcellularLocation>
        <location evidence="5">Nucleus</location>
    </subcellularLocation>
    <subcellularLocation>
        <location evidence="5">Nucleus matrix</location>
    </subcellularLocation>
    <subcellularLocation>
        <location evidence="5">Nucleus</location>
        <location evidence="5">Nucleoplasm</location>
    </subcellularLocation>
    <text evidence="5">Localization is predominantly nuclear in normal cells. Treatment with hydrogen peroxide or ionizing radiation enhances nuclear localization through redistribution of existing protein.</text>
</comment>
<comment type="alternative products">
    <event type="alternative splicing"/>
    <isoform>
        <id>O14929-1</id>
        <name>A</name>
        <name>a</name>
        <name>Nuclear</name>
        <sequence type="displayed"/>
    </isoform>
    <isoform>
        <id>O14929-2</id>
        <name>B</name>
        <name>b</name>
        <sequence type="described" ref="VSP_041129"/>
    </isoform>
</comment>
<comment type="developmental stage">
    <text evidence="5">Highly expressed in mitotic cells (at protein level).</text>
</comment>
<comment type="induction">
    <text evidence="3 12">By viruses and interferons (PubMed:31812350). Up-regulated also by estrogen (PubMed:12841681).</text>
</comment>
<comment type="PTM">
    <text evidence="9">Phosphorylated by AMPK at Ser-190; phosphorylation increases HAT1 activity.</text>
</comment>
<comment type="similarity">
    <text evidence="17">Belongs to the HAT1 family.</text>
</comment>
<comment type="sequence caution" evidence="17">
    <conflict type="erroneous initiation">
        <sequence resource="EMBL-CDS" id="AAH18682"/>
    </conflict>
    <text>Truncated N-terminus.</text>
</comment>
<comment type="online information" name="Wikipedia">
    <link uri="https://en.wikipedia.org/wiki/Histone_acetyltransferase"/>
    <text>Histone acetyltransferase entry</text>
</comment>
<feature type="initiator methionine" description="Removed" evidence="18 19">
    <location>
        <position position="1"/>
    </location>
</feature>
<feature type="chain" id="PRO_0000083902" description="Histone acetyltransferase type B catalytic subunit">
    <location>
        <begin position="2"/>
        <end position="419"/>
    </location>
</feature>
<feature type="region of interest" description="Interaction with histone H4 N-terminus" evidence="7">
    <location>
        <begin position="62"/>
        <end position="64"/>
    </location>
</feature>
<feature type="region of interest" description="Interaction with histone H4 N-terminus" evidence="17">
    <location>
        <begin position="225"/>
        <end position="227"/>
    </location>
</feature>
<feature type="active site" description="Proton donor/acceptor" evidence="16">
    <location>
        <position position="276"/>
    </location>
</feature>
<feature type="binding site" evidence="7">
    <location>
        <begin position="241"/>
        <end position="243"/>
    </location>
    <ligand>
        <name>acetyl-CoA</name>
        <dbReference type="ChEBI" id="CHEBI:57288"/>
    </ligand>
</feature>
<feature type="binding site" evidence="7">
    <location>
        <begin position="248"/>
        <end position="254"/>
    </location>
    <ligand>
        <name>acetyl-CoA</name>
        <dbReference type="ChEBI" id="CHEBI:57288"/>
    </ligand>
</feature>
<feature type="site" description="Interaction with histone H4 N-terminus" evidence="7">
    <location>
        <position position="199"/>
    </location>
</feature>
<feature type="modified residue" description="N-acetylalanine" evidence="18 19">
    <location>
        <position position="2"/>
    </location>
</feature>
<feature type="modified residue" description="N6-acetyllysine" evidence="1">
    <location>
        <position position="9"/>
    </location>
</feature>
<feature type="modified residue" description="N6-acetyllysine" evidence="1">
    <location>
        <position position="15"/>
    </location>
</feature>
<feature type="modified residue" description="Phosphoserine; by AMPK" evidence="9">
    <location>
        <position position="190"/>
    </location>
</feature>
<feature type="modified residue" description="Phosphoserine" evidence="20">
    <location>
        <position position="343"/>
    </location>
</feature>
<feature type="splice variant" id="VSP_041129" description="In isoform B." evidence="15">
    <location>
        <begin position="1"/>
        <end position="85"/>
    </location>
</feature>
<feature type="sequence variant" id="VAR_035997" description="In a colorectal cancer sample; somatic mutation." evidence="4">
    <original>A</original>
    <variation>P</variation>
    <location>
        <position position="317"/>
    </location>
</feature>
<feature type="mutagenesis site" description="Strongly reduces HAT activity." evidence="7">
    <original>D</original>
    <variation>A</variation>
    <location>
        <position position="62"/>
    </location>
</feature>
<feature type="mutagenesis site" description="Strongly reduces HAT activity." evidence="7">
    <original>E</original>
    <variation>A</variation>
    <location>
        <position position="64"/>
    </location>
</feature>
<feature type="mutagenesis site" description="Strongly reduces HAT activity." evidence="7">
    <original>E</original>
    <variation>Q</variation>
    <location>
        <position position="187"/>
    </location>
</feature>
<feature type="mutagenesis site" description="Complete loss of activity after pulsatile shear stress." evidence="9">
    <original>S</original>
    <variation>A</variation>
    <location>
        <position position="190"/>
    </location>
</feature>
<feature type="mutagenesis site" description="No loss of activity after pulsatile shear stress." evidence="9">
    <original>S</original>
    <variation>D</variation>
    <location>
        <position position="190"/>
    </location>
</feature>
<feature type="mutagenesis site" description="Strongly reduces HAT activity." evidence="7">
    <original>W</original>
    <variation>A</variation>
    <location>
        <position position="199"/>
    </location>
</feature>
<feature type="mutagenesis site" description="Strongly reduces HAT activity." evidence="7">
    <original>E</original>
    <variation>Q</variation>
    <location>
        <position position="276"/>
    </location>
</feature>
<feature type="mutagenesis site" description="Strongly reduces HAT activity." evidence="7">
    <original>D</original>
    <variation>N</variation>
    <location>
        <position position="277"/>
    </location>
</feature>
<feature type="helix" evidence="21">
    <location>
        <begin position="22"/>
        <end position="25"/>
    </location>
</feature>
<feature type="strand" evidence="21">
    <location>
        <begin position="26"/>
        <end position="28"/>
    </location>
</feature>
<feature type="helix" evidence="21">
    <location>
        <begin position="29"/>
        <end position="32"/>
    </location>
</feature>
<feature type="strand" evidence="21">
    <location>
        <begin position="33"/>
        <end position="40"/>
    </location>
</feature>
<feature type="helix" evidence="21">
    <location>
        <begin position="41"/>
        <end position="44"/>
    </location>
</feature>
<feature type="helix" evidence="21">
    <location>
        <begin position="47"/>
        <end position="49"/>
    </location>
</feature>
<feature type="helix" evidence="21">
    <location>
        <begin position="57"/>
        <end position="60"/>
    </location>
</feature>
<feature type="turn" evidence="21">
    <location>
        <begin position="61"/>
        <end position="64"/>
    </location>
</feature>
<feature type="strand" evidence="21">
    <location>
        <begin position="65"/>
        <end position="71"/>
    </location>
</feature>
<feature type="strand" evidence="21">
    <location>
        <begin position="73"/>
        <end position="79"/>
    </location>
</feature>
<feature type="turn" evidence="21">
    <location>
        <begin position="80"/>
        <end position="82"/>
    </location>
</feature>
<feature type="strand" evidence="21">
    <location>
        <begin position="85"/>
        <end position="90"/>
    </location>
</feature>
<feature type="strand" evidence="21">
    <location>
        <begin position="92"/>
        <end position="94"/>
    </location>
</feature>
<feature type="helix" evidence="21">
    <location>
        <begin position="97"/>
        <end position="100"/>
    </location>
</feature>
<feature type="helix" evidence="21">
    <location>
        <begin position="107"/>
        <end position="112"/>
    </location>
</feature>
<feature type="helix" evidence="21">
    <location>
        <begin position="123"/>
        <end position="130"/>
    </location>
</feature>
<feature type="helix" evidence="21">
    <location>
        <begin position="131"/>
        <end position="135"/>
    </location>
</feature>
<feature type="strand" evidence="21">
    <location>
        <begin position="140"/>
        <end position="148"/>
    </location>
</feature>
<feature type="strand" evidence="21">
    <location>
        <begin position="151"/>
        <end position="153"/>
    </location>
</feature>
<feature type="strand" evidence="21">
    <location>
        <begin position="157"/>
        <end position="164"/>
    </location>
</feature>
<feature type="helix" evidence="21">
    <location>
        <begin position="171"/>
        <end position="185"/>
    </location>
</feature>
<feature type="strand" evidence="21">
    <location>
        <begin position="199"/>
        <end position="210"/>
    </location>
</feature>
<feature type="strand" evidence="21">
    <location>
        <begin position="213"/>
        <end position="229"/>
    </location>
</feature>
<feature type="turn" evidence="21">
    <location>
        <begin position="230"/>
        <end position="232"/>
    </location>
</feature>
<feature type="strand" evidence="21">
    <location>
        <begin position="233"/>
        <end position="243"/>
    </location>
</feature>
<feature type="helix" evidence="21">
    <location>
        <begin position="245"/>
        <end position="247"/>
    </location>
</feature>
<feature type="helix" evidence="21">
    <location>
        <begin position="252"/>
        <end position="265"/>
    </location>
</feature>
<feature type="strand" evidence="21">
    <location>
        <begin position="273"/>
        <end position="277"/>
    </location>
</feature>
<feature type="helix" evidence="21">
    <location>
        <begin position="280"/>
        <end position="294"/>
    </location>
</feature>
<feature type="helix" evidence="21">
    <location>
        <begin position="298"/>
        <end position="300"/>
    </location>
</feature>
<feature type="helix" evidence="21">
    <location>
        <begin position="302"/>
        <end position="306"/>
    </location>
</feature>
<feature type="helix" evidence="21">
    <location>
        <begin position="311"/>
        <end position="321"/>
    </location>
</feature>
<feature type="helix" evidence="21">
    <location>
        <begin position="325"/>
        <end position="338"/>
    </location>
</feature>
<keyword id="KW-0002">3D-structure</keyword>
<keyword id="KW-0007">Acetylation</keyword>
<keyword id="KW-0012">Acyltransferase</keyword>
<keyword id="KW-0025">Alternative splicing</keyword>
<keyword id="KW-0963">Cytoplasm</keyword>
<keyword id="KW-0496">Mitochondrion</keyword>
<keyword id="KW-0539">Nucleus</keyword>
<keyword id="KW-0597">Phosphoprotein</keyword>
<keyword id="KW-1267">Proteomics identification</keyword>
<keyword id="KW-1185">Reference proteome</keyword>
<keyword id="KW-0808">Transferase</keyword>
<sequence>MAGFGAMEKFLVEYKSAVEKKLAEYKCNTNTAIELKLVRFPEDLENDIRTFFPEYTHQLFGDDETAFGYKGLKILLYYIAGSLSTMFRVEYASKVDENFDCVEADDVEGKIRQIIPPGFCTNTNDFLSLLEKEVDFKPFGTLLHTYSVLSPTGGENFTFQIYKADMTCRGFREYHERLQTFLMWFIETASFIDVDDERWHYFLVFEKYNKDGATLFATVGYMTVYNYYVYPDKTRPRVSQMLILTPFQGQGHGAQLLETVHRYYTEFPTVLDITAEDPSKSYVKLRDFVLVKLCQDLPCFSREKLMQGFNEDMVIEAQQKFKINKQHARRVYEILRLLVTDMSDAEQYRSYRLDIKRRLISPYKKKQRDLAKMRKCLRPEELTNQMNQIEISMQHEQLEESFQELVEDYRRVIERLAQE</sequence>
<organism>
    <name type="scientific">Homo sapiens</name>
    <name type="common">Human</name>
    <dbReference type="NCBI Taxonomy" id="9606"/>
    <lineage>
        <taxon>Eukaryota</taxon>
        <taxon>Metazoa</taxon>
        <taxon>Chordata</taxon>
        <taxon>Craniata</taxon>
        <taxon>Vertebrata</taxon>
        <taxon>Euteleostomi</taxon>
        <taxon>Mammalia</taxon>
        <taxon>Eutheria</taxon>
        <taxon>Euarchontoglires</taxon>
        <taxon>Primates</taxon>
        <taxon>Haplorrhini</taxon>
        <taxon>Catarrhini</taxon>
        <taxon>Hominidae</taxon>
        <taxon>Homo</taxon>
    </lineage>
</organism>
<proteinExistence type="evidence at protein level"/>
<accession>O14929</accession>
<accession>Q49A44</accession>
<accession>Q53QF0</accession>
<accession>Q53SU4</accession>
<accession>Q6P594</accession>
<accession>Q8WWB9</accession>
<protein>
    <recommendedName>
        <fullName>Histone acetyltransferase type B catalytic subunit</fullName>
        <ecNumber evidence="2 7 14">2.3.1.48</ecNumber>
    </recommendedName>
    <alternativeName>
        <fullName>Histone acetyltransferase 1</fullName>
    </alternativeName>
</protein>
<reference key="1">
    <citation type="journal article" date="1998" name="Curr. Biol.">
        <title>Nucleosomal DNA regulates the core-histone-binding subunit of the human Hat1 acetyltransferase.</title>
        <authorList>
            <person name="Verreault A."/>
            <person name="Kaufman P.D."/>
            <person name="Kobayashi R."/>
            <person name="Stillman B."/>
        </authorList>
    </citation>
    <scope>NUCLEOTIDE SEQUENCE [MRNA] (ISOFORM A)</scope>
    <scope>FUNCTION</scope>
    <scope>ENZYME ACTIVITY</scope>
    <scope>SUBUNIT</scope>
    <scope>SUBCELLULAR LOCATION</scope>
    <source>
        <tissue>Teratocarcinoma</tissue>
    </source>
</reference>
<reference key="2">
    <citation type="journal article" date="2005" name="Nature">
        <title>Generation and annotation of the DNA sequences of human chromosomes 2 and 4.</title>
        <authorList>
            <person name="Hillier L.W."/>
            <person name="Graves T.A."/>
            <person name="Fulton R.S."/>
            <person name="Fulton L.A."/>
            <person name="Pepin K.H."/>
            <person name="Minx P."/>
            <person name="Wagner-McPherson C."/>
            <person name="Layman D."/>
            <person name="Wylie K."/>
            <person name="Sekhon M."/>
            <person name="Becker M.C."/>
            <person name="Fewell G.A."/>
            <person name="Delehaunty K.D."/>
            <person name="Miner T.L."/>
            <person name="Nash W.E."/>
            <person name="Kremitzki C."/>
            <person name="Oddy L."/>
            <person name="Du H."/>
            <person name="Sun H."/>
            <person name="Bradshaw-Cordum H."/>
            <person name="Ali J."/>
            <person name="Carter J."/>
            <person name="Cordes M."/>
            <person name="Harris A."/>
            <person name="Isak A."/>
            <person name="van Brunt A."/>
            <person name="Nguyen C."/>
            <person name="Du F."/>
            <person name="Courtney L."/>
            <person name="Kalicki J."/>
            <person name="Ozersky P."/>
            <person name="Abbott S."/>
            <person name="Armstrong J."/>
            <person name="Belter E.A."/>
            <person name="Caruso L."/>
            <person name="Cedroni M."/>
            <person name="Cotton M."/>
            <person name="Davidson T."/>
            <person name="Desai A."/>
            <person name="Elliott G."/>
            <person name="Erb T."/>
            <person name="Fronick C."/>
            <person name="Gaige T."/>
            <person name="Haakenson W."/>
            <person name="Haglund K."/>
            <person name="Holmes A."/>
            <person name="Harkins R."/>
            <person name="Kim K."/>
            <person name="Kruchowski S.S."/>
            <person name="Strong C.M."/>
            <person name="Grewal N."/>
            <person name="Goyea E."/>
            <person name="Hou S."/>
            <person name="Levy A."/>
            <person name="Martinka S."/>
            <person name="Mead K."/>
            <person name="McLellan M.D."/>
            <person name="Meyer R."/>
            <person name="Randall-Maher J."/>
            <person name="Tomlinson C."/>
            <person name="Dauphin-Kohlberg S."/>
            <person name="Kozlowicz-Reilly A."/>
            <person name="Shah N."/>
            <person name="Swearengen-Shahid S."/>
            <person name="Snider J."/>
            <person name="Strong J.T."/>
            <person name="Thompson J."/>
            <person name="Yoakum M."/>
            <person name="Leonard S."/>
            <person name="Pearman C."/>
            <person name="Trani L."/>
            <person name="Radionenko M."/>
            <person name="Waligorski J.E."/>
            <person name="Wang C."/>
            <person name="Rock S.M."/>
            <person name="Tin-Wollam A.-M."/>
            <person name="Maupin R."/>
            <person name="Latreille P."/>
            <person name="Wendl M.C."/>
            <person name="Yang S.-P."/>
            <person name="Pohl C."/>
            <person name="Wallis J.W."/>
            <person name="Spieth J."/>
            <person name="Bieri T.A."/>
            <person name="Berkowicz N."/>
            <person name="Nelson J.O."/>
            <person name="Osborne J."/>
            <person name="Ding L."/>
            <person name="Meyer R."/>
            <person name="Sabo A."/>
            <person name="Shotland Y."/>
            <person name="Sinha P."/>
            <person name="Wohldmann P.E."/>
            <person name="Cook L.L."/>
            <person name="Hickenbotham M.T."/>
            <person name="Eldred J."/>
            <person name="Williams D."/>
            <person name="Jones T.A."/>
            <person name="She X."/>
            <person name="Ciccarelli F.D."/>
            <person name="Izaurralde E."/>
            <person name="Taylor J."/>
            <person name="Schmutz J."/>
            <person name="Myers R.M."/>
            <person name="Cox D.R."/>
            <person name="Huang X."/>
            <person name="McPherson J.D."/>
            <person name="Mardis E.R."/>
            <person name="Clifton S.W."/>
            <person name="Warren W.C."/>
            <person name="Chinwalla A.T."/>
            <person name="Eddy S.R."/>
            <person name="Marra M.A."/>
            <person name="Ovcharenko I."/>
            <person name="Furey T.S."/>
            <person name="Miller W."/>
            <person name="Eichler E.E."/>
            <person name="Bork P."/>
            <person name="Suyama M."/>
            <person name="Torrents D."/>
            <person name="Waterston R.H."/>
            <person name="Wilson R.K."/>
        </authorList>
    </citation>
    <scope>NUCLEOTIDE SEQUENCE [LARGE SCALE GENOMIC DNA]</scope>
</reference>
<reference key="3">
    <citation type="submission" date="2005-09" db="EMBL/GenBank/DDBJ databases">
        <authorList>
            <person name="Mural R.J."/>
            <person name="Istrail S."/>
            <person name="Sutton G.G."/>
            <person name="Florea L."/>
            <person name="Halpern A.L."/>
            <person name="Mobarry C.M."/>
            <person name="Lippert R."/>
            <person name="Walenz B."/>
            <person name="Shatkay H."/>
            <person name="Dew I."/>
            <person name="Miller J.R."/>
            <person name="Flanigan M.J."/>
            <person name="Edwards N.J."/>
            <person name="Bolanos R."/>
            <person name="Fasulo D."/>
            <person name="Halldorsson B.V."/>
            <person name="Hannenhalli S."/>
            <person name="Turner R."/>
            <person name="Yooseph S."/>
            <person name="Lu F."/>
            <person name="Nusskern D.R."/>
            <person name="Shue B.C."/>
            <person name="Zheng X.H."/>
            <person name="Zhong F."/>
            <person name="Delcher A.L."/>
            <person name="Huson D.H."/>
            <person name="Kravitz S.A."/>
            <person name="Mouchard L."/>
            <person name="Reinert K."/>
            <person name="Remington K.A."/>
            <person name="Clark A.G."/>
            <person name="Waterman M.S."/>
            <person name="Eichler E.E."/>
            <person name="Adams M.D."/>
            <person name="Hunkapiller M.W."/>
            <person name="Myers E.W."/>
            <person name="Venter J.C."/>
        </authorList>
    </citation>
    <scope>NUCLEOTIDE SEQUENCE [LARGE SCALE GENOMIC DNA]</scope>
</reference>
<reference key="4">
    <citation type="journal article" date="2004" name="Genome Res.">
        <title>The status, quality, and expansion of the NIH full-length cDNA project: the Mammalian Gene Collection (MGC).</title>
        <authorList>
            <consortium name="The MGC Project Team"/>
        </authorList>
    </citation>
    <scope>NUCLEOTIDE SEQUENCE [LARGE SCALE MRNA] (ISOFORM B)</scope>
    <scope>NUCLEOTIDE SEQUENCE [LARGE SCALE MRNA] OF 2-419 (ISOFORM A)</scope>
    <source>
        <tissue>Brain</tissue>
        <tissue>Lung</tissue>
        <tissue>Testis</tissue>
    </source>
</reference>
<reference key="5">
    <citation type="journal article" date="2001" name="J. Biol. Chem.">
        <title>Effects of acetylation of histone H4 at lysines 8 and 16 on activity of the Hat1 histone acetyltransferase.</title>
        <authorList>
            <person name="Makowski A.M."/>
            <person name="Dutnall R.N."/>
            <person name="Annunziato A.T."/>
        </authorList>
    </citation>
    <scope>FUNCTION</scope>
    <scope>CATALYTIC ACTIVITY</scope>
</reference>
<reference key="6">
    <citation type="journal article" date="2003" name="Int. J. Biol. Markers">
        <title>Quantitative real-time RT-PCR analysis of eight novel estrogen-regulated genes in breast cancer.</title>
        <authorList>
            <person name="Sorbello V."/>
            <person name="Fuso L."/>
            <person name="Sfiligoi C."/>
            <person name="Scafoglio C."/>
            <person name="Ponzone R."/>
            <person name="Biglia N."/>
            <person name="Weisz A."/>
            <person name="Sismondi P."/>
            <person name="De Bortoli M."/>
        </authorList>
    </citation>
    <scope>INDUCTION BY ESTROGEN</scope>
</reference>
<reference key="7">
    <citation type="journal article" date="2009" name="Anal. Chem.">
        <title>Lys-N and trypsin cover complementary parts of the phosphoproteome in a refined SCX-based approach.</title>
        <authorList>
            <person name="Gauci S."/>
            <person name="Helbig A.O."/>
            <person name="Slijper M."/>
            <person name="Krijgsveld J."/>
            <person name="Heck A.J."/>
            <person name="Mohammed S."/>
        </authorList>
    </citation>
    <scope>ACETYLATION [LARGE SCALE ANALYSIS] AT ALA-2</scope>
    <scope>CLEAVAGE OF INITIATOR METHIONINE [LARGE SCALE ANALYSIS]</scope>
    <scope>IDENTIFICATION BY MASS SPECTROMETRY [LARGE SCALE ANALYSIS]</scope>
</reference>
<reference key="8">
    <citation type="journal article" date="2010" name="Mol. Cell. Biochem.">
        <title>Irradiation with heavy-ion particles changes the cellular distribution of human histone acetyltransferase HAT1.</title>
        <authorList>
            <person name="Lebel E.A."/>
            <person name="Boukamp P."/>
            <person name="Tafrov S.T."/>
        </authorList>
    </citation>
    <scope>SUBCELLULAR LOCATION</scope>
    <scope>DEVELOPMENTAL STAGE</scope>
</reference>
<reference key="9">
    <citation type="journal article" date="2010" name="Nat. Struct. Mol. Biol.">
        <title>The program for processing newly synthesized histones H3.1 and H4.</title>
        <authorList>
            <person name="Campos E.I."/>
            <person name="Fillingham J."/>
            <person name="Li G."/>
            <person name="Zheng H."/>
            <person name="Voigt P."/>
            <person name="Kuo W.H."/>
            <person name="Seepany H."/>
            <person name="Gao Z."/>
            <person name="Day L.A."/>
            <person name="Greenblatt J.F."/>
            <person name="Reinberg D."/>
        </authorList>
    </citation>
    <scope>FUNCTION</scope>
    <scope>SUBUNIT</scope>
    <scope>SUBCELLULAR LOCATION</scope>
</reference>
<reference key="10">
    <citation type="journal article" date="2011" name="BMC Syst. Biol.">
        <title>Initial characterization of the human central proteome.</title>
        <authorList>
            <person name="Burkard T.R."/>
            <person name="Planyavsky M."/>
            <person name="Kaupe I."/>
            <person name="Breitwieser F.P."/>
            <person name="Buerckstuemmer T."/>
            <person name="Bennett K.L."/>
            <person name="Superti-Furga G."/>
            <person name="Colinge J."/>
        </authorList>
    </citation>
    <scope>IDENTIFICATION BY MASS SPECTROMETRY [LARGE SCALE ANALYSIS]</scope>
</reference>
<reference key="11">
    <citation type="journal article" date="2012" name="Mol. Cell. Proteomics">
        <title>Comparative large-scale characterisation of plant vs. mammal proteins reveals similar and idiosyncratic N-alpha acetylation features.</title>
        <authorList>
            <person name="Bienvenut W.V."/>
            <person name="Sumpton D."/>
            <person name="Martinez A."/>
            <person name="Lilla S."/>
            <person name="Espagne C."/>
            <person name="Meinnel T."/>
            <person name="Giglione C."/>
        </authorList>
    </citation>
    <scope>ACETYLATION [LARGE SCALE ANALYSIS] AT ALA-2</scope>
    <scope>CLEAVAGE OF INITIATOR METHIONINE [LARGE SCALE ANALYSIS]</scope>
    <scope>IDENTIFICATION BY MASS SPECTROMETRY [LARGE SCALE ANALYSIS]</scope>
</reference>
<reference key="12">
    <citation type="journal article" date="2013" name="J. Biol. Chem.">
        <title>Histone acetyltransferase 1 promotes homologous recombination in DNA repair by facilitating histone turnover.</title>
        <authorList>
            <person name="Yang X."/>
            <person name="Li L."/>
            <person name="Liang J."/>
            <person name="Shi L."/>
            <person name="Yang J."/>
            <person name="Yi X."/>
            <person name="Zhang D."/>
            <person name="Han X."/>
            <person name="Yu N."/>
            <person name="Shang Y."/>
        </authorList>
    </citation>
    <scope>FUNCTION</scope>
    <scope>SUBCELLULAR LOCATION</scope>
</reference>
<reference key="13">
    <citation type="journal article" date="2013" name="J. Proteome Res.">
        <title>Toward a comprehensive characterization of a human cancer cell phosphoproteome.</title>
        <authorList>
            <person name="Zhou H."/>
            <person name="Di Palma S."/>
            <person name="Preisinger C."/>
            <person name="Peng M."/>
            <person name="Polat A.N."/>
            <person name="Heck A.J."/>
            <person name="Mohammed S."/>
        </authorList>
    </citation>
    <scope>PHOSPHORYLATION [LARGE SCALE ANALYSIS] AT SER-343</scope>
    <scope>IDENTIFICATION BY MASS SPECTROMETRY [LARGE SCALE ANALYSIS]</scope>
    <source>
        <tissue>Erythroleukemia</tissue>
    </source>
</reference>
<reference key="14">
    <citation type="journal article" date="2017" name="Sci. Signal.">
        <title>AMPK promotes mitochondrial biogenesis and function by phosphorylating the epigenetic factors DNMT1, RBBP7, and HAT1.</title>
        <authorList>
            <person name="Marin T.L."/>
            <person name="Gongol B."/>
            <person name="Zhang F."/>
            <person name="Martin M."/>
            <person name="Johnson D.A."/>
            <person name="Xiao H."/>
            <person name="Wang Y."/>
            <person name="Subramaniam S."/>
            <person name="Chien S."/>
            <person name="Shyy J.Y."/>
        </authorList>
    </citation>
    <scope>PHOSPHORYLATION AT SER-190</scope>
    <scope>MUTAGENESIS OF SER-190</scope>
</reference>
<reference key="15">
    <citation type="journal article" date="2019" name="Theranostics">
        <title>HAT1 signaling confers to assembly and epigenetic regulation of HBV cccDNA minichromosome.</title>
        <authorList>
            <person name="Yang G."/>
            <person name="Feng J."/>
            <person name="Liu Y."/>
            <person name="Zhao M."/>
            <person name="Yuan Y."/>
            <person name="Yuan H."/>
            <person name="Yun H."/>
            <person name="Sun M."/>
            <person name="Bu Y."/>
            <person name="Liu L."/>
            <person name="Liu Z."/>
            <person name="Niu J.Q."/>
            <person name="Yin M."/>
            <person name="Song X."/>
            <person name="Miao Z."/>
            <person name="Lin Z."/>
            <person name="Zhang X."/>
        </authorList>
    </citation>
    <scope>FUNCTION (MICROBIAL INFECTION)</scope>
</reference>
<reference key="16">
    <citation type="journal article" date="2019" name="Mol. Cell">
        <title>HAT1 Coordinates Histone Production and Acetylation via H4 Promoter Binding.</title>
        <authorList>
            <person name="Gruber J.J."/>
            <person name="Geller B."/>
            <person name="Lipchik A.M."/>
            <person name="Chen J."/>
            <person name="Salahudeen A.A."/>
            <person name="Ram A.N."/>
            <person name="Ford J.M."/>
            <person name="Kuo C.J."/>
            <person name="Snyder M.P."/>
        </authorList>
    </citation>
    <scope>FUNCTION</scope>
</reference>
<reference key="17">
    <citation type="journal article" date="2020" name="J. Proteome Res.">
        <title>Hat1-Dependent Lysine Acetylation Targets Diverse Cellular Functions.</title>
        <authorList>
            <person name="Agudelo Garcia P.A."/>
            <person name="Nagarajan P."/>
            <person name="Parthun M.R."/>
        </authorList>
    </citation>
    <scope>FUNCTION</scope>
    <scope>SUBCELLULAR LOCATION</scope>
</reference>
<reference key="18">
    <citation type="journal article" date="2020" name="Mol. Cell">
        <title>Targeting UBE4A Revives Viperin Protein in Epithelium to Enhance Host Antiviral Defense.</title>
        <authorList>
            <person name="Yuan Y."/>
            <person name="Miao Y."/>
            <person name="Qian L."/>
            <person name="Zhang Y."/>
            <person name="Liu C."/>
            <person name="Liu J."/>
            <person name="Zuo Y."/>
            <person name="Feng Q."/>
            <person name="Guo T."/>
            <person name="Zhang L."/>
            <person name="Chen X."/>
            <person name="Jin L."/>
            <person name="Huang F."/>
            <person name="Zhang H."/>
            <person name="Zhang W."/>
            <person name="Li W."/>
            <person name="Xu G."/>
            <person name="Zheng H."/>
        </authorList>
    </citation>
    <scope>FUNCTION</scope>
    <scope>INDUCTION BY VIRUSES AND INTERFERONS</scope>
</reference>
<reference key="19">
    <citation type="journal article" date="2012" name="Proc. Natl. Acad. Sci. U.S.A.">
        <title>Structural basis for substrate specificity and catalysis of human histone acetyltransferase 1.</title>
        <authorList>
            <person name="Wu H."/>
            <person name="Moshkina N."/>
            <person name="Min J."/>
            <person name="Zeng H."/>
            <person name="Joshua J."/>
            <person name="Zhou M.M."/>
            <person name="Plotnikov A.N."/>
        </authorList>
    </citation>
    <scope>X-RAY CRYSTALLOGRAPHY (1.90 ANGSTROMS) OF 20-341 IN COMPLEX WITH ACETYL-COA AND HISTONE H4 PEPTIDE</scope>
    <scope>CATALYTIC ACTIVITY</scope>
    <scope>FUNCTION</scope>
    <scope>BIOPHYSICOCHEMICAL PROPERTIES</scope>
    <scope>MUTAGENESIS OF ASP-62; GLU-64; GLU-187; TRP-199; GLU-276 AND ASP-277</scope>
    <scope>ACTIVE SITE</scope>
    <scope>INTERACTION WITH HISTONE H4</scope>
</reference>
<reference key="20">
    <citation type="journal article" date="2006" name="Science">
        <title>The consensus coding sequences of human breast and colorectal cancers.</title>
        <authorList>
            <person name="Sjoeblom T."/>
            <person name="Jones S."/>
            <person name="Wood L.D."/>
            <person name="Parsons D.W."/>
            <person name="Lin J."/>
            <person name="Barber T.D."/>
            <person name="Mandelker D."/>
            <person name="Leary R.J."/>
            <person name="Ptak J."/>
            <person name="Silliman N."/>
            <person name="Szabo S."/>
            <person name="Buckhaults P."/>
            <person name="Farrell C."/>
            <person name="Meeh P."/>
            <person name="Markowitz S.D."/>
            <person name="Willis J."/>
            <person name="Dawson D."/>
            <person name="Willson J.K.V."/>
            <person name="Gazdar A.F."/>
            <person name="Hartigan J."/>
            <person name="Wu L."/>
            <person name="Liu C."/>
            <person name="Parmigiani G."/>
            <person name="Park B.H."/>
            <person name="Bachman K.E."/>
            <person name="Papadopoulos N."/>
            <person name="Vogelstein B."/>
            <person name="Kinzler K.W."/>
            <person name="Velculescu V.E."/>
        </authorList>
    </citation>
    <scope>VARIANT [LARGE SCALE ANALYSIS] PRO-317</scope>
</reference>
<name>HAT1_HUMAN</name>
<dbReference type="EC" id="2.3.1.48" evidence="2 7 14"/>
<dbReference type="EMBL" id="AF030424">
    <property type="protein sequence ID" value="AAC02425.1"/>
    <property type="molecule type" value="mRNA"/>
</dbReference>
<dbReference type="EMBL" id="AC015976">
    <property type="protein sequence ID" value="AAY14731.1"/>
    <property type="molecule type" value="Genomic_DNA"/>
</dbReference>
<dbReference type="EMBL" id="AC114745">
    <property type="protein sequence ID" value="AAX93247.1"/>
    <property type="molecule type" value="Genomic_DNA"/>
</dbReference>
<dbReference type="EMBL" id="CH471058">
    <property type="protein sequence ID" value="EAX11195.1"/>
    <property type="molecule type" value="Genomic_DNA"/>
</dbReference>
<dbReference type="EMBL" id="BC018682">
    <property type="protein sequence ID" value="AAH18682.1"/>
    <property type="status" value="ALT_INIT"/>
    <property type="molecule type" value="mRNA"/>
</dbReference>
<dbReference type="EMBL" id="BC045673">
    <property type="status" value="NOT_ANNOTATED_CDS"/>
    <property type="molecule type" value="mRNA"/>
</dbReference>
<dbReference type="EMBL" id="BC063003">
    <property type="protein sequence ID" value="AAH63003.1"/>
    <property type="molecule type" value="mRNA"/>
</dbReference>
<dbReference type="CCDS" id="CCDS2245.1">
    <molecule id="O14929-1"/>
</dbReference>
<dbReference type="RefSeq" id="NP_003633.2">
    <molecule id="O14929-1"/>
    <property type="nucleotide sequence ID" value="NM_003642.4"/>
</dbReference>
<dbReference type="PDB" id="2P0W">
    <property type="method" value="X-ray"/>
    <property type="resolution" value="1.90 A"/>
    <property type="chains" value="A/B=20-341"/>
</dbReference>
<dbReference type="PDB" id="6VO5">
    <property type="method" value="X-ray"/>
    <property type="resolution" value="1.60 A"/>
    <property type="chains" value="A/B=20-341"/>
</dbReference>
<dbReference type="PDB" id="9MJG">
    <property type="method" value="X-ray"/>
    <property type="resolution" value="2.58 A"/>
    <property type="chains" value="A/B/C/D/E/F/G/H=20-341"/>
</dbReference>
<dbReference type="PDBsum" id="2P0W"/>
<dbReference type="PDBsum" id="6VO5"/>
<dbReference type="PDBsum" id="9MJG"/>
<dbReference type="SMR" id="O14929"/>
<dbReference type="BioGRID" id="114092">
    <property type="interactions" value="218"/>
</dbReference>
<dbReference type="CORUM" id="O14929"/>
<dbReference type="DIP" id="DIP-52811N"/>
<dbReference type="FunCoup" id="O14929">
    <property type="interactions" value="3364"/>
</dbReference>
<dbReference type="IntAct" id="O14929">
    <property type="interactions" value="70"/>
</dbReference>
<dbReference type="MINT" id="O14929"/>
<dbReference type="STRING" id="9606.ENSP00000264108"/>
<dbReference type="BindingDB" id="O14929"/>
<dbReference type="ChEMBL" id="CHEMBL4523128"/>
<dbReference type="GlyGen" id="O14929">
    <property type="glycosylation" value="2 sites, 1 O-linked glycan (1 site)"/>
</dbReference>
<dbReference type="iPTMnet" id="O14929"/>
<dbReference type="MetOSite" id="O14929"/>
<dbReference type="PhosphoSitePlus" id="O14929"/>
<dbReference type="SwissPalm" id="O14929"/>
<dbReference type="BioMuta" id="HAT1"/>
<dbReference type="jPOST" id="O14929"/>
<dbReference type="MassIVE" id="O14929"/>
<dbReference type="PaxDb" id="9606-ENSP00000264108"/>
<dbReference type="PeptideAtlas" id="O14929"/>
<dbReference type="ProteomicsDB" id="48308">
    <molecule id="O14929-1"/>
</dbReference>
<dbReference type="ProteomicsDB" id="48309">
    <molecule id="O14929-2"/>
</dbReference>
<dbReference type="Pumba" id="O14929"/>
<dbReference type="Antibodypedia" id="19385">
    <property type="antibodies" value="406 antibodies from 33 providers"/>
</dbReference>
<dbReference type="DNASU" id="8520"/>
<dbReference type="Ensembl" id="ENST00000264108.5">
    <molecule id="O14929-1"/>
    <property type="protein sequence ID" value="ENSP00000264108.4"/>
    <property type="gene ID" value="ENSG00000128708.13"/>
</dbReference>
<dbReference type="GeneID" id="8520"/>
<dbReference type="KEGG" id="hsa:8520"/>
<dbReference type="MANE-Select" id="ENST00000264108.5">
    <property type="protein sequence ID" value="ENSP00000264108.4"/>
    <property type="RefSeq nucleotide sequence ID" value="NM_003642.4"/>
    <property type="RefSeq protein sequence ID" value="NP_003633.2"/>
</dbReference>
<dbReference type="UCSC" id="uc002uhi.4">
    <molecule id="O14929-1"/>
    <property type="organism name" value="human"/>
</dbReference>
<dbReference type="AGR" id="HGNC:4821"/>
<dbReference type="CTD" id="8520"/>
<dbReference type="DisGeNET" id="8520"/>
<dbReference type="GeneCards" id="HAT1"/>
<dbReference type="HGNC" id="HGNC:4821">
    <property type="gene designation" value="HAT1"/>
</dbReference>
<dbReference type="HPA" id="ENSG00000128708">
    <property type="expression patterns" value="Low tissue specificity"/>
</dbReference>
<dbReference type="MIM" id="603053">
    <property type="type" value="gene"/>
</dbReference>
<dbReference type="neXtProt" id="NX_O14929"/>
<dbReference type="OpenTargets" id="ENSG00000128708"/>
<dbReference type="PharmGKB" id="PA29197"/>
<dbReference type="VEuPathDB" id="HostDB:ENSG00000128708"/>
<dbReference type="eggNOG" id="KOG2696">
    <property type="taxonomic scope" value="Eukaryota"/>
</dbReference>
<dbReference type="GeneTree" id="ENSGT00390000007069"/>
<dbReference type="HOGENOM" id="CLU_036024_0_0_1"/>
<dbReference type="InParanoid" id="O14929"/>
<dbReference type="OMA" id="WTCDAND"/>
<dbReference type="OrthoDB" id="10253098at2759"/>
<dbReference type="PAN-GO" id="O14929">
    <property type="GO annotations" value="2 GO annotations based on evolutionary models"/>
</dbReference>
<dbReference type="PhylomeDB" id="O14929"/>
<dbReference type="TreeFam" id="TF314995"/>
<dbReference type="BRENDA" id="2.3.1.48">
    <property type="organism ID" value="2681"/>
</dbReference>
<dbReference type="PathwayCommons" id="O14929"/>
<dbReference type="Reactome" id="R-HSA-3214847">
    <property type="pathway name" value="HATs acetylate histones"/>
</dbReference>
<dbReference type="SignaLink" id="O14929"/>
<dbReference type="SIGNOR" id="O14929"/>
<dbReference type="BioGRID-ORCS" id="8520">
    <property type="hits" value="17 hits in 1176 CRISPR screens"/>
</dbReference>
<dbReference type="ChiTaRS" id="HAT1">
    <property type="organism name" value="human"/>
</dbReference>
<dbReference type="EvolutionaryTrace" id="O14929"/>
<dbReference type="GeneWiki" id="HAT1"/>
<dbReference type="GenomeRNAi" id="8520"/>
<dbReference type="Pharos" id="O14929">
    <property type="development level" value="Tbio"/>
</dbReference>
<dbReference type="PRO" id="PR:O14929"/>
<dbReference type="Proteomes" id="UP000005640">
    <property type="component" value="Chromosome 2"/>
</dbReference>
<dbReference type="RNAct" id="O14929">
    <property type="molecule type" value="protein"/>
</dbReference>
<dbReference type="Bgee" id="ENSG00000128708">
    <property type="expression patterns" value="Expressed in primordial germ cell in gonad and 215 other cell types or tissues"/>
</dbReference>
<dbReference type="ExpressionAtlas" id="O14929">
    <property type="expression patterns" value="baseline and differential"/>
</dbReference>
<dbReference type="GO" id="GO:0000785">
    <property type="term" value="C:chromatin"/>
    <property type="evidence" value="ECO:0000314"/>
    <property type="project" value="UniProtKB"/>
</dbReference>
<dbReference type="GO" id="GO:0000781">
    <property type="term" value="C:chromosome, telomeric region"/>
    <property type="evidence" value="ECO:0007005"/>
    <property type="project" value="BHF-UCL"/>
</dbReference>
<dbReference type="GO" id="GO:0005739">
    <property type="term" value="C:mitochondrion"/>
    <property type="evidence" value="ECO:0007669"/>
    <property type="project" value="UniProtKB-SubCell"/>
</dbReference>
<dbReference type="GO" id="GO:0016363">
    <property type="term" value="C:nuclear matrix"/>
    <property type="evidence" value="ECO:0007669"/>
    <property type="project" value="UniProtKB-SubCell"/>
</dbReference>
<dbReference type="GO" id="GO:0005654">
    <property type="term" value="C:nucleoplasm"/>
    <property type="evidence" value="ECO:0000314"/>
    <property type="project" value="HPA"/>
</dbReference>
<dbReference type="GO" id="GO:0005634">
    <property type="term" value="C:nucleus"/>
    <property type="evidence" value="ECO:0000304"/>
    <property type="project" value="ProtInc"/>
</dbReference>
<dbReference type="GO" id="GO:0032991">
    <property type="term" value="C:protein-containing complex"/>
    <property type="evidence" value="ECO:0000314"/>
    <property type="project" value="UniProtKB"/>
</dbReference>
<dbReference type="GO" id="GO:0004402">
    <property type="term" value="F:histone acetyltransferase activity"/>
    <property type="evidence" value="ECO:0000304"/>
    <property type="project" value="ProtInc"/>
</dbReference>
<dbReference type="GO" id="GO:0042393">
    <property type="term" value="F:histone binding"/>
    <property type="evidence" value="ECO:0007669"/>
    <property type="project" value="InterPro"/>
</dbReference>
<dbReference type="GO" id="GO:0010485">
    <property type="term" value="F:histone H4 acetyltransferase activity"/>
    <property type="evidence" value="ECO:0000318"/>
    <property type="project" value="GO_Central"/>
</dbReference>
<dbReference type="GO" id="GO:0043997">
    <property type="term" value="F:histone H4K12 acetyltransferase activity"/>
    <property type="evidence" value="ECO:0000314"/>
    <property type="project" value="UniProtKB"/>
</dbReference>
<dbReference type="GO" id="GO:0051276">
    <property type="term" value="P:chromosome organization"/>
    <property type="evidence" value="ECO:0000304"/>
    <property type="project" value="ProtInc"/>
</dbReference>
<dbReference type="GO" id="GO:0006475">
    <property type="term" value="P:internal protein amino acid acetylation"/>
    <property type="evidence" value="ECO:0000304"/>
    <property type="project" value="ProtInc"/>
</dbReference>
<dbReference type="GO" id="GO:0006334">
    <property type="term" value="P:nucleosome assembly"/>
    <property type="evidence" value="ECO:0000314"/>
    <property type="project" value="GO_Central"/>
</dbReference>
<dbReference type="GO" id="GO:0031509">
    <property type="term" value="P:subtelomeric heterochromatin formation"/>
    <property type="evidence" value="ECO:0007669"/>
    <property type="project" value="InterPro"/>
</dbReference>
<dbReference type="FunFam" id="1.10.10.390:FF:000001">
    <property type="entry name" value="Histone acetyltransferase type B catalytic subunit"/>
    <property type="match status" value="1"/>
</dbReference>
<dbReference type="FunFam" id="3.90.360.10:FF:000001">
    <property type="entry name" value="Histone acetyltransferase type B catalytic subunit"/>
    <property type="match status" value="1"/>
</dbReference>
<dbReference type="Gene3D" id="1.10.10.390">
    <property type="match status" value="1"/>
</dbReference>
<dbReference type="Gene3D" id="3.40.630.30">
    <property type="match status" value="1"/>
</dbReference>
<dbReference type="Gene3D" id="3.90.360.10">
    <property type="entry name" value="Histone acetyl transferase 1 (HAT1), N-terminal domain"/>
    <property type="match status" value="1"/>
</dbReference>
<dbReference type="InterPro" id="IPR016181">
    <property type="entry name" value="Acyl_CoA_acyltransferase"/>
</dbReference>
<dbReference type="InterPro" id="IPR048776">
    <property type="entry name" value="HAT1_C"/>
</dbReference>
<dbReference type="InterPro" id="IPR019467">
    <property type="entry name" value="Hat1_N"/>
</dbReference>
<dbReference type="InterPro" id="IPR037113">
    <property type="entry name" value="Hat1_N_sf"/>
</dbReference>
<dbReference type="InterPro" id="IPR017380">
    <property type="entry name" value="Hist_AcTrfase_B-typ_cat-su"/>
</dbReference>
<dbReference type="InterPro" id="IPR013523">
    <property type="entry name" value="Hist_AcTrfase_HAT1_C"/>
</dbReference>
<dbReference type="PANTHER" id="PTHR12046">
    <property type="entry name" value="HISTONE ACETYLTRANSFERASE TYPE B CATALYTIC SUBUNIT"/>
    <property type="match status" value="1"/>
</dbReference>
<dbReference type="Pfam" id="PF21183">
    <property type="entry name" value="HAT1_C"/>
    <property type="match status" value="1"/>
</dbReference>
<dbReference type="Pfam" id="PF10394">
    <property type="entry name" value="Hat1_N"/>
    <property type="match status" value="1"/>
</dbReference>
<dbReference type="PIRSF" id="PIRSF038084">
    <property type="entry name" value="HAT-B_cat"/>
    <property type="match status" value="1"/>
</dbReference>
<dbReference type="SUPFAM" id="SSF55729">
    <property type="entry name" value="Acyl-CoA N-acyltransferases (Nat)"/>
    <property type="match status" value="1"/>
</dbReference>